<gene>
    <name evidence="2" type="primary">ddl</name>
    <name type="ordered locus">Pmen_0924</name>
</gene>
<protein>
    <recommendedName>
        <fullName evidence="2">D-alanine--D-alanine ligase</fullName>
        <ecNumber evidence="2">6.3.2.4</ecNumber>
    </recommendedName>
    <alternativeName>
        <fullName evidence="2">D-Ala-D-Ala ligase</fullName>
    </alternativeName>
    <alternativeName>
        <fullName evidence="2">D-alanylalanine synthetase</fullName>
    </alternativeName>
</protein>
<proteinExistence type="inferred from homology"/>
<accession>A4XQS6</accession>
<reference key="1">
    <citation type="submission" date="2007-04" db="EMBL/GenBank/DDBJ databases">
        <title>Complete sequence of Pseudomonas mendocina ymp.</title>
        <authorList>
            <consortium name="US DOE Joint Genome Institute"/>
            <person name="Copeland A."/>
            <person name="Lucas S."/>
            <person name="Lapidus A."/>
            <person name="Barry K."/>
            <person name="Glavina del Rio T."/>
            <person name="Dalin E."/>
            <person name="Tice H."/>
            <person name="Pitluck S."/>
            <person name="Kiss H."/>
            <person name="Brettin T."/>
            <person name="Detter J.C."/>
            <person name="Bruce D."/>
            <person name="Han C."/>
            <person name="Schmutz J."/>
            <person name="Larimer F."/>
            <person name="Land M."/>
            <person name="Hauser L."/>
            <person name="Kyrpides N."/>
            <person name="Mikhailova N."/>
            <person name="Hersman L."/>
            <person name="Dubois J."/>
            <person name="Maurice P."/>
            <person name="Richardson P."/>
        </authorList>
    </citation>
    <scope>NUCLEOTIDE SEQUENCE [LARGE SCALE GENOMIC DNA]</scope>
    <source>
        <strain>ymp</strain>
    </source>
</reference>
<name>DDL_ECTM1</name>
<keyword id="KW-0067">ATP-binding</keyword>
<keyword id="KW-0133">Cell shape</keyword>
<keyword id="KW-0961">Cell wall biogenesis/degradation</keyword>
<keyword id="KW-0963">Cytoplasm</keyword>
<keyword id="KW-0436">Ligase</keyword>
<keyword id="KW-0460">Magnesium</keyword>
<keyword id="KW-0464">Manganese</keyword>
<keyword id="KW-0479">Metal-binding</keyword>
<keyword id="KW-0547">Nucleotide-binding</keyword>
<keyword id="KW-0573">Peptidoglycan synthesis</keyword>
<comment type="function">
    <text evidence="2">Cell wall formation.</text>
</comment>
<comment type="catalytic activity">
    <reaction evidence="2">
        <text>2 D-alanine + ATP = D-alanyl-D-alanine + ADP + phosphate + H(+)</text>
        <dbReference type="Rhea" id="RHEA:11224"/>
        <dbReference type="ChEBI" id="CHEBI:15378"/>
        <dbReference type="ChEBI" id="CHEBI:30616"/>
        <dbReference type="ChEBI" id="CHEBI:43474"/>
        <dbReference type="ChEBI" id="CHEBI:57416"/>
        <dbReference type="ChEBI" id="CHEBI:57822"/>
        <dbReference type="ChEBI" id="CHEBI:456216"/>
        <dbReference type="EC" id="6.3.2.4"/>
    </reaction>
</comment>
<comment type="cofactor">
    <cofactor evidence="1">
        <name>Mg(2+)</name>
        <dbReference type="ChEBI" id="CHEBI:18420"/>
    </cofactor>
    <cofactor evidence="1">
        <name>Mn(2+)</name>
        <dbReference type="ChEBI" id="CHEBI:29035"/>
    </cofactor>
    <text evidence="1">Binds 2 magnesium or manganese ions per subunit.</text>
</comment>
<comment type="pathway">
    <text evidence="2">Cell wall biogenesis; peptidoglycan biosynthesis.</text>
</comment>
<comment type="subcellular location">
    <subcellularLocation>
        <location evidence="2">Cytoplasm</location>
    </subcellularLocation>
</comment>
<comment type="similarity">
    <text evidence="2">Belongs to the D-alanine--D-alanine ligase family.</text>
</comment>
<sequence>MSLHSSLDPKAFGRVAVLFGGKSAEREVSLKSGNAVLSALQAAGVDAFGIDVGDDFLQRLASEKIDRAFIVLHGRGGEDGSMQGLLECAGIPYTGSGILASALAMDKLRTKQVWHSLGLPTPRHAVLTSQADCEAAAAELGFPLIVKPAHEGSSIGMAKVESVEALIAAWQDAARYDSQVLVEQWIAGPEYTVAVLRGEVLPPIGLGTPHSFYDYDAKYLADDTQYRIPCGLSAEKEAELKELTARACEAVGTQGWARADVMQDASGQFWLLEVNTVPGMTDHSLVPMAARAAGLDFQQLVLAILADSVEARG</sequence>
<dbReference type="EC" id="6.3.2.4" evidence="2"/>
<dbReference type="EMBL" id="CP000680">
    <property type="protein sequence ID" value="ABP83692.1"/>
    <property type="molecule type" value="Genomic_DNA"/>
</dbReference>
<dbReference type="SMR" id="A4XQS6"/>
<dbReference type="STRING" id="399739.Pmen_0924"/>
<dbReference type="KEGG" id="pmy:Pmen_0924"/>
<dbReference type="PATRIC" id="fig|399739.8.peg.933"/>
<dbReference type="eggNOG" id="COG1181">
    <property type="taxonomic scope" value="Bacteria"/>
</dbReference>
<dbReference type="HOGENOM" id="CLU_039268_1_2_6"/>
<dbReference type="OrthoDB" id="9813261at2"/>
<dbReference type="UniPathway" id="UPA00219"/>
<dbReference type="GO" id="GO:0005829">
    <property type="term" value="C:cytosol"/>
    <property type="evidence" value="ECO:0007669"/>
    <property type="project" value="TreeGrafter"/>
</dbReference>
<dbReference type="GO" id="GO:0005524">
    <property type="term" value="F:ATP binding"/>
    <property type="evidence" value="ECO:0007669"/>
    <property type="project" value="UniProtKB-KW"/>
</dbReference>
<dbReference type="GO" id="GO:0008716">
    <property type="term" value="F:D-alanine-D-alanine ligase activity"/>
    <property type="evidence" value="ECO:0007669"/>
    <property type="project" value="UniProtKB-UniRule"/>
</dbReference>
<dbReference type="GO" id="GO:0046872">
    <property type="term" value="F:metal ion binding"/>
    <property type="evidence" value="ECO:0007669"/>
    <property type="project" value="UniProtKB-KW"/>
</dbReference>
<dbReference type="GO" id="GO:0071555">
    <property type="term" value="P:cell wall organization"/>
    <property type="evidence" value="ECO:0007669"/>
    <property type="project" value="UniProtKB-KW"/>
</dbReference>
<dbReference type="GO" id="GO:0009252">
    <property type="term" value="P:peptidoglycan biosynthetic process"/>
    <property type="evidence" value="ECO:0007669"/>
    <property type="project" value="UniProtKB-UniRule"/>
</dbReference>
<dbReference type="GO" id="GO:0008360">
    <property type="term" value="P:regulation of cell shape"/>
    <property type="evidence" value="ECO:0007669"/>
    <property type="project" value="UniProtKB-KW"/>
</dbReference>
<dbReference type="FunFam" id="3.30.1490.20:FF:000007">
    <property type="entry name" value="D-alanine--D-alanine ligase"/>
    <property type="match status" value="1"/>
</dbReference>
<dbReference type="FunFam" id="3.40.50.20:FF:000013">
    <property type="entry name" value="D-alanine--D-alanine ligase"/>
    <property type="match status" value="1"/>
</dbReference>
<dbReference type="Gene3D" id="3.40.50.20">
    <property type="match status" value="1"/>
</dbReference>
<dbReference type="Gene3D" id="3.30.1490.20">
    <property type="entry name" value="ATP-grasp fold, A domain"/>
    <property type="match status" value="1"/>
</dbReference>
<dbReference type="Gene3D" id="3.30.470.20">
    <property type="entry name" value="ATP-grasp fold, B domain"/>
    <property type="match status" value="1"/>
</dbReference>
<dbReference type="HAMAP" id="MF_00047">
    <property type="entry name" value="Dala_Dala_lig"/>
    <property type="match status" value="1"/>
</dbReference>
<dbReference type="InterPro" id="IPR011761">
    <property type="entry name" value="ATP-grasp"/>
</dbReference>
<dbReference type="InterPro" id="IPR013815">
    <property type="entry name" value="ATP_grasp_subdomain_1"/>
</dbReference>
<dbReference type="InterPro" id="IPR000291">
    <property type="entry name" value="D-Ala_lig_Van_CS"/>
</dbReference>
<dbReference type="InterPro" id="IPR005905">
    <property type="entry name" value="D_ala_D_ala"/>
</dbReference>
<dbReference type="InterPro" id="IPR011095">
    <property type="entry name" value="Dala_Dala_lig_C"/>
</dbReference>
<dbReference type="InterPro" id="IPR011127">
    <property type="entry name" value="Dala_Dala_lig_N"/>
</dbReference>
<dbReference type="InterPro" id="IPR016185">
    <property type="entry name" value="PreATP-grasp_dom_sf"/>
</dbReference>
<dbReference type="NCBIfam" id="TIGR01205">
    <property type="entry name" value="D_ala_D_alaTIGR"/>
    <property type="match status" value="1"/>
</dbReference>
<dbReference type="NCBIfam" id="NF002378">
    <property type="entry name" value="PRK01372.1"/>
    <property type="match status" value="1"/>
</dbReference>
<dbReference type="PANTHER" id="PTHR23132">
    <property type="entry name" value="D-ALANINE--D-ALANINE LIGASE"/>
    <property type="match status" value="1"/>
</dbReference>
<dbReference type="PANTHER" id="PTHR23132:SF23">
    <property type="entry name" value="D-ALANINE--D-ALANINE LIGASE B"/>
    <property type="match status" value="1"/>
</dbReference>
<dbReference type="Pfam" id="PF07478">
    <property type="entry name" value="Dala_Dala_lig_C"/>
    <property type="match status" value="1"/>
</dbReference>
<dbReference type="Pfam" id="PF01820">
    <property type="entry name" value="Dala_Dala_lig_N"/>
    <property type="match status" value="1"/>
</dbReference>
<dbReference type="PIRSF" id="PIRSF039102">
    <property type="entry name" value="Ddl/VanB"/>
    <property type="match status" value="1"/>
</dbReference>
<dbReference type="SUPFAM" id="SSF56059">
    <property type="entry name" value="Glutathione synthetase ATP-binding domain-like"/>
    <property type="match status" value="1"/>
</dbReference>
<dbReference type="SUPFAM" id="SSF52440">
    <property type="entry name" value="PreATP-grasp domain"/>
    <property type="match status" value="1"/>
</dbReference>
<dbReference type="PROSITE" id="PS50975">
    <property type="entry name" value="ATP_GRASP"/>
    <property type="match status" value="1"/>
</dbReference>
<dbReference type="PROSITE" id="PS00843">
    <property type="entry name" value="DALA_DALA_LIGASE_1"/>
    <property type="match status" value="1"/>
</dbReference>
<dbReference type="PROSITE" id="PS00844">
    <property type="entry name" value="DALA_DALA_LIGASE_2"/>
    <property type="match status" value="1"/>
</dbReference>
<evidence type="ECO:0000250" key="1"/>
<evidence type="ECO:0000255" key="2">
    <source>
        <dbReference type="HAMAP-Rule" id="MF_00047"/>
    </source>
</evidence>
<feature type="chain" id="PRO_0000341155" description="D-alanine--D-alanine ligase">
    <location>
        <begin position="1"/>
        <end position="313"/>
    </location>
</feature>
<feature type="domain" description="ATP-grasp" evidence="2">
    <location>
        <begin position="111"/>
        <end position="306"/>
    </location>
</feature>
<feature type="binding site" evidence="2">
    <location>
        <begin position="137"/>
        <end position="192"/>
    </location>
    <ligand>
        <name>ATP</name>
        <dbReference type="ChEBI" id="CHEBI:30616"/>
    </ligand>
</feature>
<feature type="binding site" evidence="2">
    <location>
        <position position="260"/>
    </location>
    <ligand>
        <name>Mg(2+)</name>
        <dbReference type="ChEBI" id="CHEBI:18420"/>
        <label>1</label>
    </ligand>
</feature>
<feature type="binding site" evidence="2">
    <location>
        <position position="273"/>
    </location>
    <ligand>
        <name>Mg(2+)</name>
        <dbReference type="ChEBI" id="CHEBI:18420"/>
        <label>1</label>
    </ligand>
</feature>
<feature type="binding site" evidence="2">
    <location>
        <position position="273"/>
    </location>
    <ligand>
        <name>Mg(2+)</name>
        <dbReference type="ChEBI" id="CHEBI:18420"/>
        <label>2</label>
    </ligand>
</feature>
<feature type="binding site" evidence="2">
    <location>
        <position position="275"/>
    </location>
    <ligand>
        <name>Mg(2+)</name>
        <dbReference type="ChEBI" id="CHEBI:18420"/>
        <label>2</label>
    </ligand>
</feature>
<organism>
    <name type="scientific">Ectopseudomonas mendocina (strain ymp)</name>
    <name type="common">Pseudomonas mendocina</name>
    <dbReference type="NCBI Taxonomy" id="399739"/>
    <lineage>
        <taxon>Bacteria</taxon>
        <taxon>Pseudomonadati</taxon>
        <taxon>Pseudomonadota</taxon>
        <taxon>Gammaproteobacteria</taxon>
        <taxon>Pseudomonadales</taxon>
        <taxon>Pseudomonadaceae</taxon>
        <taxon>Ectopseudomonas</taxon>
    </lineage>
</organism>